<organism>
    <name type="scientific">Nitrosospira multiformis (strain ATCC 25196 / NCIMB 11849 / C 71)</name>
    <dbReference type="NCBI Taxonomy" id="323848"/>
    <lineage>
        <taxon>Bacteria</taxon>
        <taxon>Pseudomonadati</taxon>
        <taxon>Pseudomonadota</taxon>
        <taxon>Betaproteobacteria</taxon>
        <taxon>Nitrosomonadales</taxon>
        <taxon>Nitrosomonadaceae</taxon>
        <taxon>Nitrosospira</taxon>
    </lineage>
</organism>
<comment type="function">
    <text evidence="1">Part of the ABC transporter complex CcmAB involved in the biogenesis of c-type cytochromes; once thought to export heme, this seems not to be the case, but its exact role is uncertain. Responsible for energy coupling to the transport system.</text>
</comment>
<comment type="catalytic activity">
    <reaction evidence="1">
        <text>heme b(in) + ATP + H2O = heme b(out) + ADP + phosphate + H(+)</text>
        <dbReference type="Rhea" id="RHEA:19261"/>
        <dbReference type="ChEBI" id="CHEBI:15377"/>
        <dbReference type="ChEBI" id="CHEBI:15378"/>
        <dbReference type="ChEBI" id="CHEBI:30616"/>
        <dbReference type="ChEBI" id="CHEBI:43474"/>
        <dbReference type="ChEBI" id="CHEBI:60344"/>
        <dbReference type="ChEBI" id="CHEBI:456216"/>
        <dbReference type="EC" id="7.6.2.5"/>
    </reaction>
</comment>
<comment type="subunit">
    <text evidence="1">The complex is composed of two ATP-binding proteins (CcmA) and two transmembrane proteins (CcmB).</text>
</comment>
<comment type="subcellular location">
    <subcellularLocation>
        <location evidence="1">Cell inner membrane</location>
        <topology evidence="1">Peripheral membrane protein</topology>
    </subcellularLocation>
</comment>
<comment type="similarity">
    <text evidence="1">Belongs to the ABC transporter superfamily. CcmA exporter (TC 3.A.1.107) family.</text>
</comment>
<protein>
    <recommendedName>
        <fullName evidence="1">Cytochrome c biogenesis ATP-binding export protein CcmA</fullName>
        <ecNumber evidence="1">7.6.2.5</ecNumber>
    </recommendedName>
    <alternativeName>
        <fullName evidence="1">Heme exporter protein A</fullName>
    </alternativeName>
</protein>
<evidence type="ECO:0000255" key="1">
    <source>
        <dbReference type="HAMAP-Rule" id="MF_01707"/>
    </source>
</evidence>
<gene>
    <name evidence="1" type="primary">ccmA</name>
    <name type="ordered locus">Nmul_A1217</name>
</gene>
<name>CCMA_NITMU</name>
<proteinExistence type="inferred from homology"/>
<dbReference type="EC" id="7.6.2.5" evidence="1"/>
<dbReference type="EMBL" id="CP000103">
    <property type="protein sequence ID" value="ABB74520.1"/>
    <property type="molecule type" value="Genomic_DNA"/>
</dbReference>
<dbReference type="RefSeq" id="WP_011380561.1">
    <property type="nucleotide sequence ID" value="NC_007614.1"/>
</dbReference>
<dbReference type="SMR" id="Q2Y9Q1"/>
<dbReference type="STRING" id="323848.Nmul_A1217"/>
<dbReference type="KEGG" id="nmu:Nmul_A1217"/>
<dbReference type="eggNOG" id="COG4133">
    <property type="taxonomic scope" value="Bacteria"/>
</dbReference>
<dbReference type="HOGENOM" id="CLU_000604_1_2_4"/>
<dbReference type="OrthoDB" id="9800654at2"/>
<dbReference type="Proteomes" id="UP000002718">
    <property type="component" value="Chromosome"/>
</dbReference>
<dbReference type="GO" id="GO:0005886">
    <property type="term" value="C:plasma membrane"/>
    <property type="evidence" value="ECO:0007669"/>
    <property type="project" value="UniProtKB-SubCell"/>
</dbReference>
<dbReference type="GO" id="GO:0015439">
    <property type="term" value="F:ABC-type heme transporter activity"/>
    <property type="evidence" value="ECO:0007669"/>
    <property type="project" value="UniProtKB-EC"/>
</dbReference>
<dbReference type="GO" id="GO:0005524">
    <property type="term" value="F:ATP binding"/>
    <property type="evidence" value="ECO:0007669"/>
    <property type="project" value="UniProtKB-KW"/>
</dbReference>
<dbReference type="GO" id="GO:0016887">
    <property type="term" value="F:ATP hydrolysis activity"/>
    <property type="evidence" value="ECO:0007669"/>
    <property type="project" value="InterPro"/>
</dbReference>
<dbReference type="GO" id="GO:0017004">
    <property type="term" value="P:cytochrome complex assembly"/>
    <property type="evidence" value="ECO:0007669"/>
    <property type="project" value="UniProtKB-KW"/>
</dbReference>
<dbReference type="Gene3D" id="3.40.50.300">
    <property type="entry name" value="P-loop containing nucleotide triphosphate hydrolases"/>
    <property type="match status" value="1"/>
</dbReference>
<dbReference type="InterPro" id="IPR003593">
    <property type="entry name" value="AAA+_ATPase"/>
</dbReference>
<dbReference type="InterPro" id="IPR003439">
    <property type="entry name" value="ABC_transporter-like_ATP-bd"/>
</dbReference>
<dbReference type="InterPro" id="IPR017871">
    <property type="entry name" value="ABC_transporter-like_CS"/>
</dbReference>
<dbReference type="InterPro" id="IPR005895">
    <property type="entry name" value="ABC_transptr_haem_export_CcmA"/>
</dbReference>
<dbReference type="InterPro" id="IPR027417">
    <property type="entry name" value="P-loop_NTPase"/>
</dbReference>
<dbReference type="NCBIfam" id="TIGR01189">
    <property type="entry name" value="ccmA"/>
    <property type="match status" value="1"/>
</dbReference>
<dbReference type="NCBIfam" id="NF010061">
    <property type="entry name" value="PRK13538.1"/>
    <property type="match status" value="1"/>
</dbReference>
<dbReference type="PANTHER" id="PTHR43499">
    <property type="entry name" value="ABC TRANSPORTER I FAMILY MEMBER 1"/>
    <property type="match status" value="1"/>
</dbReference>
<dbReference type="PANTHER" id="PTHR43499:SF1">
    <property type="entry name" value="ABC TRANSPORTER I FAMILY MEMBER 1"/>
    <property type="match status" value="1"/>
</dbReference>
<dbReference type="Pfam" id="PF00005">
    <property type="entry name" value="ABC_tran"/>
    <property type="match status" value="1"/>
</dbReference>
<dbReference type="SMART" id="SM00382">
    <property type="entry name" value="AAA"/>
    <property type="match status" value="1"/>
</dbReference>
<dbReference type="SUPFAM" id="SSF52540">
    <property type="entry name" value="P-loop containing nucleoside triphosphate hydrolases"/>
    <property type="match status" value="1"/>
</dbReference>
<dbReference type="PROSITE" id="PS00211">
    <property type="entry name" value="ABC_TRANSPORTER_1"/>
    <property type="match status" value="1"/>
</dbReference>
<dbReference type="PROSITE" id="PS50893">
    <property type="entry name" value="ABC_TRANSPORTER_2"/>
    <property type="match status" value="1"/>
</dbReference>
<dbReference type="PROSITE" id="PS51243">
    <property type="entry name" value="CCMA"/>
    <property type="match status" value="1"/>
</dbReference>
<sequence>MPTLEGIDLTCIRGDRKLFSGVNFLLESGGLMQVQGPNGSGKTSLLRMLCGLASPAEGEIRWDGTQIRSLGGDYFGAMTYLGHLGGVKDDLTAIENLRISSALGGVDLDERKAHDALQHMGLGGRELLPAKVLSQGQRRRVTLARLLVCGTVLWILDEPLTALDTSAVKLVQGLIERHLEHGGMIVMTTHQEIEIAGAAIQRLQLT</sequence>
<reference key="1">
    <citation type="submission" date="2005-08" db="EMBL/GenBank/DDBJ databases">
        <title>Complete sequence of chromosome 1 of Nitrosospira multiformis ATCC 25196.</title>
        <authorList>
            <person name="Copeland A."/>
            <person name="Lucas S."/>
            <person name="Lapidus A."/>
            <person name="Barry K."/>
            <person name="Detter J.C."/>
            <person name="Glavina T."/>
            <person name="Hammon N."/>
            <person name="Israni S."/>
            <person name="Pitluck S."/>
            <person name="Chain P."/>
            <person name="Malfatti S."/>
            <person name="Shin M."/>
            <person name="Vergez L."/>
            <person name="Schmutz J."/>
            <person name="Larimer F."/>
            <person name="Land M."/>
            <person name="Hauser L."/>
            <person name="Kyrpides N."/>
            <person name="Lykidis A."/>
            <person name="Richardson P."/>
        </authorList>
    </citation>
    <scope>NUCLEOTIDE SEQUENCE [LARGE SCALE GENOMIC DNA]</scope>
    <source>
        <strain>ATCC 25196 / NCIMB 11849 / C 71</strain>
    </source>
</reference>
<feature type="chain" id="PRO_0000271937" description="Cytochrome c biogenesis ATP-binding export protein CcmA">
    <location>
        <begin position="1"/>
        <end position="206"/>
    </location>
</feature>
<feature type="domain" description="ABC transporter" evidence="1">
    <location>
        <begin position="4"/>
        <end position="205"/>
    </location>
</feature>
<feature type="binding site" evidence="1">
    <location>
        <begin position="36"/>
        <end position="43"/>
    </location>
    <ligand>
        <name>ATP</name>
        <dbReference type="ChEBI" id="CHEBI:30616"/>
    </ligand>
</feature>
<accession>Q2Y9Q1</accession>
<keyword id="KW-0067">ATP-binding</keyword>
<keyword id="KW-0997">Cell inner membrane</keyword>
<keyword id="KW-1003">Cell membrane</keyword>
<keyword id="KW-0201">Cytochrome c-type biogenesis</keyword>
<keyword id="KW-0472">Membrane</keyword>
<keyword id="KW-0547">Nucleotide-binding</keyword>
<keyword id="KW-1185">Reference proteome</keyword>
<keyword id="KW-1278">Translocase</keyword>
<keyword id="KW-0813">Transport</keyword>